<proteinExistence type="inferred from homology"/>
<keyword id="KW-0963">Cytoplasm</keyword>
<keyword id="KW-0378">Hydrolase</keyword>
<sequence length="117" mass="13000">MVVKLVVAVRKDLDMGKGKIAAQVAHAAVSCAIKAMKEKKKIFDEWMDEGQKKIVVKVPNVDEIYIIKKKADSMGIINEVIQDRGYTQVEPGTVTCIGLGPDYEVYLDDITGKYKLL</sequence>
<dbReference type="EC" id="3.1.1.29" evidence="1"/>
<dbReference type="EMBL" id="BA000011">
    <property type="protein sequence ID" value="BAB59330.1"/>
    <property type="molecule type" value="Genomic_DNA"/>
</dbReference>
<dbReference type="RefSeq" id="WP_010916443.1">
    <property type="nucleotide sequence ID" value="NC_002689.2"/>
</dbReference>
<dbReference type="SMR" id="Q97CB4"/>
<dbReference type="STRING" id="273116.gene:9380958"/>
<dbReference type="PaxDb" id="273116-14324402"/>
<dbReference type="GeneID" id="1441673"/>
<dbReference type="KEGG" id="tvo:TVG0193013"/>
<dbReference type="eggNOG" id="arCOG04228">
    <property type="taxonomic scope" value="Archaea"/>
</dbReference>
<dbReference type="HOGENOM" id="CLU_073661_2_2_2"/>
<dbReference type="OrthoDB" id="6075at2157"/>
<dbReference type="PhylomeDB" id="Q97CB4"/>
<dbReference type="Proteomes" id="UP000001017">
    <property type="component" value="Chromosome"/>
</dbReference>
<dbReference type="GO" id="GO:0005829">
    <property type="term" value="C:cytosol"/>
    <property type="evidence" value="ECO:0007669"/>
    <property type="project" value="TreeGrafter"/>
</dbReference>
<dbReference type="GO" id="GO:0004045">
    <property type="term" value="F:peptidyl-tRNA hydrolase activity"/>
    <property type="evidence" value="ECO:0007669"/>
    <property type="project" value="UniProtKB-UniRule"/>
</dbReference>
<dbReference type="GO" id="GO:0006412">
    <property type="term" value="P:translation"/>
    <property type="evidence" value="ECO:0007669"/>
    <property type="project" value="UniProtKB-UniRule"/>
</dbReference>
<dbReference type="CDD" id="cd02430">
    <property type="entry name" value="PTH2"/>
    <property type="match status" value="1"/>
</dbReference>
<dbReference type="FunFam" id="3.40.1490.10:FF:000001">
    <property type="entry name" value="Peptidyl-tRNA hydrolase 2"/>
    <property type="match status" value="1"/>
</dbReference>
<dbReference type="Gene3D" id="3.40.1490.10">
    <property type="entry name" value="Bit1"/>
    <property type="match status" value="1"/>
</dbReference>
<dbReference type="HAMAP" id="MF_00628">
    <property type="entry name" value="Pept_tRNA_hydro_arch"/>
    <property type="match status" value="1"/>
</dbReference>
<dbReference type="InterPro" id="IPR023476">
    <property type="entry name" value="Pep_tRNA_hydro_II_dom_sf"/>
</dbReference>
<dbReference type="InterPro" id="IPR034759">
    <property type="entry name" value="Pept_tRNA_hydro_arch"/>
</dbReference>
<dbReference type="InterPro" id="IPR002833">
    <property type="entry name" value="PTH2"/>
</dbReference>
<dbReference type="NCBIfam" id="TIGR00283">
    <property type="entry name" value="arch_pth2"/>
    <property type="match status" value="1"/>
</dbReference>
<dbReference type="NCBIfam" id="NF003314">
    <property type="entry name" value="PRK04322.1"/>
    <property type="match status" value="1"/>
</dbReference>
<dbReference type="PANTHER" id="PTHR12649">
    <property type="entry name" value="PEPTIDYL-TRNA HYDROLASE 2"/>
    <property type="match status" value="1"/>
</dbReference>
<dbReference type="PANTHER" id="PTHR12649:SF11">
    <property type="entry name" value="PEPTIDYL-TRNA HYDROLASE 2, MITOCHONDRIAL"/>
    <property type="match status" value="1"/>
</dbReference>
<dbReference type="Pfam" id="PF01981">
    <property type="entry name" value="PTH2"/>
    <property type="match status" value="1"/>
</dbReference>
<dbReference type="SUPFAM" id="SSF102462">
    <property type="entry name" value="Peptidyl-tRNA hydrolase II"/>
    <property type="match status" value="1"/>
</dbReference>
<comment type="function">
    <text evidence="1">The natural substrate for this enzyme may be peptidyl-tRNAs which drop off the ribosome during protein synthesis.</text>
</comment>
<comment type="catalytic activity">
    <reaction evidence="1">
        <text>an N-acyl-L-alpha-aminoacyl-tRNA + H2O = an N-acyl-L-amino acid + a tRNA + H(+)</text>
        <dbReference type="Rhea" id="RHEA:54448"/>
        <dbReference type="Rhea" id="RHEA-COMP:10123"/>
        <dbReference type="Rhea" id="RHEA-COMP:13883"/>
        <dbReference type="ChEBI" id="CHEBI:15377"/>
        <dbReference type="ChEBI" id="CHEBI:15378"/>
        <dbReference type="ChEBI" id="CHEBI:59874"/>
        <dbReference type="ChEBI" id="CHEBI:78442"/>
        <dbReference type="ChEBI" id="CHEBI:138191"/>
        <dbReference type="EC" id="3.1.1.29"/>
    </reaction>
</comment>
<comment type="subcellular location">
    <subcellularLocation>
        <location evidence="1">Cytoplasm</location>
    </subcellularLocation>
</comment>
<comment type="similarity">
    <text evidence="1">Belongs to the PTH2 family.</text>
</comment>
<feature type="chain" id="PRO_0000120307" description="Peptidyl-tRNA hydrolase">
    <location>
        <begin position="1"/>
        <end position="117"/>
    </location>
</feature>
<organism>
    <name type="scientific">Thermoplasma volcanium (strain ATCC 51530 / DSM 4299 / JCM 9571 / NBRC 15438 / GSS1)</name>
    <dbReference type="NCBI Taxonomy" id="273116"/>
    <lineage>
        <taxon>Archaea</taxon>
        <taxon>Methanobacteriati</taxon>
        <taxon>Thermoplasmatota</taxon>
        <taxon>Thermoplasmata</taxon>
        <taxon>Thermoplasmatales</taxon>
        <taxon>Thermoplasmataceae</taxon>
        <taxon>Thermoplasma</taxon>
    </lineage>
</organism>
<reference key="1">
    <citation type="journal article" date="2000" name="Proc. Natl. Acad. Sci. U.S.A.">
        <title>Archaeal adaptation to higher temperatures revealed by genomic sequence of Thermoplasma volcanium.</title>
        <authorList>
            <person name="Kawashima T."/>
            <person name="Amano N."/>
            <person name="Koike H."/>
            <person name="Makino S."/>
            <person name="Higuchi S."/>
            <person name="Kawashima-Ohya Y."/>
            <person name="Watanabe K."/>
            <person name="Yamazaki M."/>
            <person name="Kanehori K."/>
            <person name="Kawamoto T."/>
            <person name="Nunoshiba T."/>
            <person name="Yamamoto Y."/>
            <person name="Aramaki H."/>
            <person name="Makino K."/>
            <person name="Suzuki M."/>
        </authorList>
    </citation>
    <scope>NUCLEOTIDE SEQUENCE [LARGE SCALE GENOMIC DNA]</scope>
    <source>
        <strain>ATCC 51530 / DSM 4299 / JCM 9571 / NBRC 15438 / GSS1</strain>
    </source>
</reference>
<evidence type="ECO:0000255" key="1">
    <source>
        <dbReference type="HAMAP-Rule" id="MF_00628"/>
    </source>
</evidence>
<gene>
    <name evidence="1" type="primary">pth</name>
    <name type="ordered locus">TV0188</name>
    <name type="ORF">TVG0193013</name>
</gene>
<protein>
    <recommendedName>
        <fullName evidence="1">Peptidyl-tRNA hydrolase</fullName>
        <shortName evidence="1">PTH</shortName>
        <ecNumber evidence="1">3.1.1.29</ecNumber>
    </recommendedName>
</protein>
<name>PTH_THEVO</name>
<accession>Q97CB4</accession>